<feature type="chain" id="PRO_1000206481" description="Glycerol-1-phosphate dehydrogenase [NAD(P)+]">
    <location>
        <begin position="1"/>
        <end position="351"/>
    </location>
</feature>
<feature type="binding site" evidence="1">
    <location>
        <begin position="97"/>
        <end position="101"/>
    </location>
    <ligand>
        <name>NAD(+)</name>
        <dbReference type="ChEBI" id="CHEBI:57540"/>
    </ligand>
</feature>
<feature type="binding site" evidence="1">
    <location>
        <begin position="119"/>
        <end position="122"/>
    </location>
    <ligand>
        <name>NAD(+)</name>
        <dbReference type="ChEBI" id="CHEBI:57540"/>
    </ligand>
</feature>
<feature type="binding site" evidence="1">
    <location>
        <position position="124"/>
    </location>
    <ligand>
        <name>substrate</name>
    </ligand>
</feature>
<feature type="binding site" evidence="1">
    <location>
        <position position="128"/>
    </location>
    <ligand>
        <name>NAD(+)</name>
        <dbReference type="ChEBI" id="CHEBI:57540"/>
    </ligand>
</feature>
<feature type="binding site" evidence="1">
    <location>
        <position position="171"/>
    </location>
    <ligand>
        <name>substrate</name>
    </ligand>
</feature>
<feature type="binding site" evidence="1">
    <location>
        <position position="171"/>
    </location>
    <ligand>
        <name>Zn(2+)</name>
        <dbReference type="ChEBI" id="CHEBI:29105"/>
        <note>catalytic</note>
    </ligand>
</feature>
<feature type="binding site" evidence="1">
    <location>
        <position position="251"/>
    </location>
    <ligand>
        <name>Zn(2+)</name>
        <dbReference type="ChEBI" id="CHEBI:29105"/>
        <note>catalytic</note>
    </ligand>
</feature>
<feature type="binding site" evidence="1">
    <location>
        <position position="255"/>
    </location>
    <ligand>
        <name>substrate</name>
    </ligand>
</feature>
<feature type="binding site" evidence="1">
    <location>
        <position position="267"/>
    </location>
    <ligand>
        <name>Zn(2+)</name>
        <dbReference type="ChEBI" id="CHEBI:29105"/>
        <note>catalytic</note>
    </ligand>
</feature>
<comment type="function">
    <text evidence="1">Catalyzes the NAD(P)H-dependent reduction of dihydroxyacetonephosphate (DHAP or glycerone phosphate) to glycerol 1-phosphate (G1P). The G1P thus generated is used as the glycerophosphate backbone of phospholipids in the cellular membranes of Archaea.</text>
</comment>
<comment type="catalytic activity">
    <reaction evidence="1">
        <text>sn-glycerol 1-phosphate + NAD(+) = dihydroxyacetone phosphate + NADH + H(+)</text>
        <dbReference type="Rhea" id="RHEA:21412"/>
        <dbReference type="ChEBI" id="CHEBI:15378"/>
        <dbReference type="ChEBI" id="CHEBI:57540"/>
        <dbReference type="ChEBI" id="CHEBI:57642"/>
        <dbReference type="ChEBI" id="CHEBI:57685"/>
        <dbReference type="ChEBI" id="CHEBI:57945"/>
        <dbReference type="EC" id="1.1.1.261"/>
    </reaction>
</comment>
<comment type="catalytic activity">
    <reaction evidence="1">
        <text>sn-glycerol 1-phosphate + NADP(+) = dihydroxyacetone phosphate + NADPH + H(+)</text>
        <dbReference type="Rhea" id="RHEA:21416"/>
        <dbReference type="ChEBI" id="CHEBI:15378"/>
        <dbReference type="ChEBI" id="CHEBI:57642"/>
        <dbReference type="ChEBI" id="CHEBI:57685"/>
        <dbReference type="ChEBI" id="CHEBI:57783"/>
        <dbReference type="ChEBI" id="CHEBI:58349"/>
        <dbReference type="EC" id="1.1.1.261"/>
    </reaction>
</comment>
<comment type="cofactor">
    <cofactor evidence="1">
        <name>Zn(2+)</name>
        <dbReference type="ChEBI" id="CHEBI:29105"/>
    </cofactor>
    <text evidence="1">Binds 1 zinc ion per subunit.</text>
</comment>
<comment type="pathway">
    <text evidence="1">Membrane lipid metabolism; glycerophospholipid metabolism.</text>
</comment>
<comment type="subunit">
    <text evidence="1">Homodimer.</text>
</comment>
<comment type="subcellular location">
    <subcellularLocation>
        <location evidence="1">Cytoplasm</location>
    </subcellularLocation>
</comment>
<comment type="similarity">
    <text evidence="1">Belongs to the glycerol-1-phosphate dehydrogenase family.</text>
</comment>
<proteinExistence type="inferred from homology"/>
<keyword id="KW-0963">Cytoplasm</keyword>
<keyword id="KW-0444">Lipid biosynthesis</keyword>
<keyword id="KW-0443">Lipid metabolism</keyword>
<keyword id="KW-0479">Metal-binding</keyword>
<keyword id="KW-0520">NAD</keyword>
<keyword id="KW-0521">NADP</keyword>
<keyword id="KW-0560">Oxidoreductase</keyword>
<keyword id="KW-0594">Phospholipid biosynthesis</keyword>
<keyword id="KW-1208">Phospholipid metabolism</keyword>
<keyword id="KW-0862">Zinc</keyword>
<protein>
    <recommendedName>
        <fullName evidence="1">Glycerol-1-phosphate dehydrogenase [NAD(P)+]</fullName>
        <shortName evidence="1">G1P dehydrogenase</shortName>
        <shortName evidence="1">G1PDH</shortName>
        <ecNumber evidence="1">1.1.1.261</ecNumber>
    </recommendedName>
    <alternativeName>
        <fullName evidence="1">Enantiomeric glycerophosphate synthase</fullName>
    </alternativeName>
    <alternativeName>
        <fullName evidence="1">sn-glycerol-1-phosphate dehydrogenase</fullName>
    </alternativeName>
</protein>
<accession>C3NEA4</accession>
<reference key="1">
    <citation type="journal article" date="2009" name="Proc. Natl. Acad. Sci. U.S.A.">
        <title>Biogeography of the Sulfolobus islandicus pan-genome.</title>
        <authorList>
            <person name="Reno M.L."/>
            <person name="Held N.L."/>
            <person name="Fields C.J."/>
            <person name="Burke P.V."/>
            <person name="Whitaker R.J."/>
        </authorList>
    </citation>
    <scope>NUCLEOTIDE SEQUENCE [LARGE SCALE GENOMIC DNA]</scope>
    <source>
        <strain>Y.G.57.14 / Yellowstone #1</strain>
    </source>
</reference>
<gene>
    <name evidence="1" type="primary">egsA</name>
    <name type="ordered locus">YG5714_1376</name>
</gene>
<dbReference type="EC" id="1.1.1.261" evidence="1"/>
<dbReference type="EMBL" id="CP001403">
    <property type="protein sequence ID" value="ACP45643.1"/>
    <property type="molecule type" value="Genomic_DNA"/>
</dbReference>
<dbReference type="RefSeq" id="WP_012716165.1">
    <property type="nucleotide sequence ID" value="NC_012622.1"/>
</dbReference>
<dbReference type="SMR" id="C3NEA4"/>
<dbReference type="GeneID" id="7806764"/>
<dbReference type="KEGG" id="siy:YG5714_1376"/>
<dbReference type="HOGENOM" id="CLU_038362_0_0_2"/>
<dbReference type="UniPathway" id="UPA00940"/>
<dbReference type="Proteomes" id="UP000002308">
    <property type="component" value="Chromosome"/>
</dbReference>
<dbReference type="GO" id="GO:0005737">
    <property type="term" value="C:cytoplasm"/>
    <property type="evidence" value="ECO:0007669"/>
    <property type="project" value="UniProtKB-SubCell"/>
</dbReference>
<dbReference type="GO" id="GO:0106357">
    <property type="term" value="F:glycerol-1-phosphate dehydrogenase (NAD+) activity"/>
    <property type="evidence" value="ECO:0007669"/>
    <property type="project" value="RHEA"/>
</dbReference>
<dbReference type="GO" id="GO:0106358">
    <property type="term" value="F:glycerol-1-phosphate dehydrogenase (NADP+) activity"/>
    <property type="evidence" value="ECO:0007669"/>
    <property type="project" value="RHEA"/>
</dbReference>
<dbReference type="GO" id="GO:0046872">
    <property type="term" value="F:metal ion binding"/>
    <property type="evidence" value="ECO:0007669"/>
    <property type="project" value="UniProtKB-KW"/>
</dbReference>
<dbReference type="GO" id="GO:0006650">
    <property type="term" value="P:glycerophospholipid metabolic process"/>
    <property type="evidence" value="ECO:0007669"/>
    <property type="project" value="UniProtKB-UniRule"/>
</dbReference>
<dbReference type="GO" id="GO:0008654">
    <property type="term" value="P:phospholipid biosynthetic process"/>
    <property type="evidence" value="ECO:0007669"/>
    <property type="project" value="UniProtKB-KW"/>
</dbReference>
<dbReference type="CDD" id="cd08173">
    <property type="entry name" value="Gro1PDH"/>
    <property type="match status" value="1"/>
</dbReference>
<dbReference type="Gene3D" id="3.40.50.1970">
    <property type="match status" value="1"/>
</dbReference>
<dbReference type="Gene3D" id="1.20.1090.10">
    <property type="entry name" value="Dehydroquinate synthase-like - alpha domain"/>
    <property type="match status" value="1"/>
</dbReference>
<dbReference type="HAMAP" id="MF_00497_A">
    <property type="entry name" value="G1P_dehydrogenase_A"/>
    <property type="match status" value="1"/>
</dbReference>
<dbReference type="InterPro" id="IPR023002">
    <property type="entry name" value="G1P_dehydrogenase_arc"/>
</dbReference>
<dbReference type="InterPro" id="IPR032837">
    <property type="entry name" value="G1PDH"/>
</dbReference>
<dbReference type="InterPro" id="IPR016205">
    <property type="entry name" value="Glycerol_DH"/>
</dbReference>
<dbReference type="NCBIfam" id="NF002022">
    <property type="entry name" value="PRK00843.1"/>
    <property type="match status" value="1"/>
</dbReference>
<dbReference type="PANTHER" id="PTHR43616">
    <property type="entry name" value="GLYCEROL DEHYDROGENASE"/>
    <property type="match status" value="1"/>
</dbReference>
<dbReference type="PANTHER" id="PTHR43616:SF5">
    <property type="entry name" value="GLYCEROL DEHYDROGENASE 1"/>
    <property type="match status" value="1"/>
</dbReference>
<dbReference type="Pfam" id="PF13685">
    <property type="entry name" value="Fe-ADH_2"/>
    <property type="match status" value="1"/>
</dbReference>
<dbReference type="PIRSF" id="PIRSF000112">
    <property type="entry name" value="Glycerol_dehydrogenase"/>
    <property type="match status" value="1"/>
</dbReference>
<dbReference type="SUPFAM" id="SSF56796">
    <property type="entry name" value="Dehydroquinate synthase-like"/>
    <property type="match status" value="1"/>
</dbReference>
<sequence>MNVKEHVISLPRRVFVGHDIIYDISIYFSQLGITSPFLIVTGTKYTKKIADRVIENLPKNAKYEVIEIDTATLDDVYKVEEVVKKVNPNILLGIGGGKVIDVTKYAAFRNNLEFVSIPTSPSHDGITSPFASIKGLQKPVSVKAKEPLAIIADIEILSLSPRRLINAGIGDTIGKIIAVRDWRLAAKLRGEYYGDYTASLALMSAKHAFQCTKIINKDIKYGVRMLIEALISSGVAMGMAGSTRPASGSEHLFAHAVELLHPEGVLHGELVGLGTIIMAYLHGINWKIIRDRLKKIGFPVKAKDLGLSDEEVIKALTIAHTIRPERYTILGDRGLTWSSAEKIARVTKIID</sequence>
<evidence type="ECO:0000255" key="1">
    <source>
        <dbReference type="HAMAP-Rule" id="MF_00497"/>
    </source>
</evidence>
<organism>
    <name type="scientific">Saccharolobus islandicus (strain Y.G.57.14 / Yellowstone #1)</name>
    <name type="common">Sulfolobus islandicus</name>
    <dbReference type="NCBI Taxonomy" id="439386"/>
    <lineage>
        <taxon>Archaea</taxon>
        <taxon>Thermoproteota</taxon>
        <taxon>Thermoprotei</taxon>
        <taxon>Sulfolobales</taxon>
        <taxon>Sulfolobaceae</taxon>
        <taxon>Saccharolobus</taxon>
    </lineage>
</organism>
<name>G1PDH_SACI7</name>